<protein>
    <recommendedName>
        <fullName>Protein osa</fullName>
    </recommendedName>
</protein>
<comment type="function">
    <text>Suppression of A.tumefaciens oncogenicity.</text>
</comment>
<keyword id="KW-0002">3D-structure</keyword>
<keyword id="KW-0614">Plasmid</keyword>
<gene>
    <name type="primary">osa</name>
</gene>
<sequence>MLMLLRRRCRAWLEIRRLDKELAQSSGLPLELPQIVPNAWNEVVWRLPVPNHPDAFMTASNAAQSDFIVYVNGLAFYRAWLALGVEDSQACPLKQDMPKDRKYPSSAAHFAVGIDSPVPLADVSPTMILGHFAVCFTDGMTRSMWLLAHEVAVFPVLSRDEASAVMLAEHVGVAAPIQVSKLREQCRKI</sequence>
<evidence type="ECO:0007829" key="1">
    <source>
        <dbReference type="PDB" id="4O7K"/>
    </source>
</evidence>
<evidence type="ECO:0007829" key="2">
    <source>
        <dbReference type="PDB" id="4OVB"/>
    </source>
</evidence>
<dbReference type="EMBL" id="U30471">
    <property type="protein sequence ID" value="AAA75248.1"/>
    <property type="molecule type" value="Genomic_DNA"/>
</dbReference>
<dbReference type="PIR" id="S23149">
    <property type="entry name" value="S23149"/>
</dbReference>
<dbReference type="PDB" id="4O7K">
    <property type="method" value="X-ray"/>
    <property type="resolution" value="1.75 A"/>
    <property type="chains" value="A=3-189"/>
</dbReference>
<dbReference type="PDB" id="4OVB">
    <property type="method" value="X-ray"/>
    <property type="resolution" value="2.03 A"/>
    <property type="chains" value="A=3-189"/>
</dbReference>
<dbReference type="PDBsum" id="4O7K"/>
<dbReference type="PDBsum" id="4OVB"/>
<dbReference type="SMR" id="P29772"/>
<dbReference type="EvolutionaryTrace" id="P29772"/>
<dbReference type="CDD" id="cd16389">
    <property type="entry name" value="FIN"/>
    <property type="match status" value="1"/>
</dbReference>
<dbReference type="InterPro" id="IPR035615">
    <property type="entry name" value="FiwA/Osa"/>
</dbReference>
<dbReference type="InterPro" id="IPR054044">
    <property type="entry name" value="PFIN"/>
</dbReference>
<dbReference type="Pfam" id="PF22162">
    <property type="entry name" value="PFIN"/>
    <property type="match status" value="1"/>
</dbReference>
<name>OSA_SHIFL</name>
<organism>
    <name type="scientific">Shigella flexneri</name>
    <dbReference type="NCBI Taxonomy" id="623"/>
    <lineage>
        <taxon>Bacteria</taxon>
        <taxon>Pseudomonadati</taxon>
        <taxon>Pseudomonadota</taxon>
        <taxon>Gammaproteobacteria</taxon>
        <taxon>Enterobacterales</taxon>
        <taxon>Enterobacteriaceae</taxon>
        <taxon>Shigella</taxon>
    </lineage>
</organism>
<geneLocation type="plasmid">
    <name>IncW pSa</name>
</geneLocation>
<accession>P29772</accession>
<reference key="1">
    <citation type="journal article" date="1991" name="J. Bacteriol.">
        <title>The osa gene of pSa encodes a 21.1-kilodalton protein that suppresses Agrobacterium tumefaciens oncogenicity.</title>
        <authorList>
            <person name="Close S.M."/>
            <person name="Kado C.I."/>
        </authorList>
    </citation>
    <scope>NUCLEOTIDE SEQUENCE [GENOMIC DNA]</scope>
</reference>
<reference key="2">
    <citation type="journal article" date="1994" name="J. Bacteriol.">
        <title>Inhibition of Agrobacterium tumefaciens oncogenicity by the osa gene of pSa.</title>
        <authorList>
            <person name="Chen C.Y."/>
            <person name="Kado C.I."/>
        </authorList>
    </citation>
    <scope>INVOLVEMENT IN SUPPRESSION OF ONCOGENICITY</scope>
</reference>
<proteinExistence type="evidence at protein level"/>
<feature type="chain" id="PRO_0000058085" description="Protein osa">
    <location>
        <begin position="1"/>
        <end position="189"/>
    </location>
</feature>
<feature type="helix" evidence="1">
    <location>
        <begin position="4"/>
        <end position="24"/>
    </location>
</feature>
<feature type="turn" evidence="2">
    <location>
        <begin position="25"/>
        <end position="27"/>
    </location>
</feature>
<feature type="strand" evidence="2">
    <location>
        <begin position="34"/>
        <end position="36"/>
    </location>
</feature>
<feature type="strand" evidence="1">
    <location>
        <begin position="39"/>
        <end position="42"/>
    </location>
</feature>
<feature type="strand" evidence="1">
    <location>
        <begin position="44"/>
        <end position="47"/>
    </location>
</feature>
<feature type="strand" evidence="1">
    <location>
        <begin position="55"/>
        <end position="58"/>
    </location>
</feature>
<feature type="strand" evidence="1">
    <location>
        <begin position="67"/>
        <end position="72"/>
    </location>
</feature>
<feature type="helix" evidence="1">
    <location>
        <begin position="73"/>
        <end position="81"/>
    </location>
</feature>
<feature type="strand" evidence="1">
    <location>
        <begin position="85"/>
        <end position="87"/>
    </location>
</feature>
<feature type="helix" evidence="1">
    <location>
        <begin position="94"/>
        <end position="99"/>
    </location>
</feature>
<feature type="helix" evidence="1">
    <location>
        <begin position="103"/>
        <end position="112"/>
    </location>
</feature>
<feature type="strand" evidence="1">
    <location>
        <begin position="122"/>
        <end position="128"/>
    </location>
</feature>
<feature type="strand" evidence="1">
    <location>
        <begin position="131"/>
        <end position="138"/>
    </location>
</feature>
<feature type="helix" evidence="1">
    <location>
        <begin position="140"/>
        <end position="148"/>
    </location>
</feature>
<feature type="strand" evidence="1">
    <location>
        <begin position="152"/>
        <end position="160"/>
    </location>
</feature>
<feature type="helix" evidence="1">
    <location>
        <begin position="161"/>
        <end position="171"/>
    </location>
</feature>
<feature type="strand" evidence="1">
    <location>
        <begin position="172"/>
        <end position="174"/>
    </location>
</feature>
<feature type="helix" evidence="1">
    <location>
        <begin position="179"/>
        <end position="189"/>
    </location>
</feature>